<feature type="chain" id="PRO_1000045188" description="5-oxoprolinase subunit A">
    <location>
        <begin position="1"/>
        <end position="254"/>
    </location>
</feature>
<gene>
    <name evidence="1" type="primary">pxpA</name>
    <name type="ordered locus">Bamb_3084</name>
</gene>
<keyword id="KW-0067">ATP-binding</keyword>
<keyword id="KW-0378">Hydrolase</keyword>
<keyword id="KW-0547">Nucleotide-binding</keyword>
<organism>
    <name type="scientific">Burkholderia ambifaria (strain ATCC BAA-244 / DSM 16087 / CCUG 44356 / LMG 19182 / AMMD)</name>
    <name type="common">Burkholderia cepacia (strain AMMD)</name>
    <dbReference type="NCBI Taxonomy" id="339670"/>
    <lineage>
        <taxon>Bacteria</taxon>
        <taxon>Pseudomonadati</taxon>
        <taxon>Pseudomonadota</taxon>
        <taxon>Betaproteobacteria</taxon>
        <taxon>Burkholderiales</taxon>
        <taxon>Burkholderiaceae</taxon>
        <taxon>Burkholderia</taxon>
        <taxon>Burkholderia cepacia complex</taxon>
    </lineage>
</organism>
<accession>Q0BB33</accession>
<comment type="function">
    <text evidence="1">Catalyzes the cleavage of 5-oxoproline to form L-glutamate coupled to the hydrolysis of ATP to ADP and inorganic phosphate.</text>
</comment>
<comment type="catalytic activity">
    <reaction evidence="1">
        <text>5-oxo-L-proline + ATP + 2 H2O = L-glutamate + ADP + phosphate + H(+)</text>
        <dbReference type="Rhea" id="RHEA:10348"/>
        <dbReference type="ChEBI" id="CHEBI:15377"/>
        <dbReference type="ChEBI" id="CHEBI:15378"/>
        <dbReference type="ChEBI" id="CHEBI:29985"/>
        <dbReference type="ChEBI" id="CHEBI:30616"/>
        <dbReference type="ChEBI" id="CHEBI:43474"/>
        <dbReference type="ChEBI" id="CHEBI:58402"/>
        <dbReference type="ChEBI" id="CHEBI:456216"/>
        <dbReference type="EC" id="3.5.2.9"/>
    </reaction>
</comment>
<comment type="subunit">
    <text evidence="1">Forms a complex composed of PxpA, PxpB and PxpC.</text>
</comment>
<comment type="similarity">
    <text evidence="1">Belongs to the LamB/PxpA family.</text>
</comment>
<sequence length="254" mass="26545">MEIDLNADLGEGCGSDEALLDLVTSANIACGWHAGGANAMRDCVRWAVQKGVSIGAHPSFHDPENFGRKEMQLPAGDIYAGVLYQLGALSAIAQAEGGRIAHVKPHGALYNQAARDPLIADAVVSAIHDFDPSLAVFGLANSVFVAAARHAGLAAVEEVFADRGYRADGSLVPRSQPGALIDDENAVLARTLDMVRERKVRAVSGEWVPLNAQTVCLHGDGPHALAFAKRIRTALEAAGVDVVAPGALQADEDA</sequence>
<protein>
    <recommendedName>
        <fullName evidence="1">5-oxoprolinase subunit A</fullName>
        <shortName evidence="1">5-OPase subunit A</shortName>
        <ecNumber evidence="1">3.5.2.9</ecNumber>
    </recommendedName>
    <alternativeName>
        <fullName evidence="1">5-oxoprolinase (ATP-hydrolyzing) subunit A</fullName>
    </alternativeName>
</protein>
<evidence type="ECO:0000255" key="1">
    <source>
        <dbReference type="HAMAP-Rule" id="MF_00691"/>
    </source>
</evidence>
<proteinExistence type="inferred from homology"/>
<dbReference type="EC" id="3.5.2.9" evidence="1"/>
<dbReference type="EMBL" id="CP000440">
    <property type="protein sequence ID" value="ABI88640.1"/>
    <property type="molecule type" value="Genomic_DNA"/>
</dbReference>
<dbReference type="RefSeq" id="WP_011658155.1">
    <property type="nucleotide sequence ID" value="NZ_CP009798.1"/>
</dbReference>
<dbReference type="SMR" id="Q0BB33"/>
<dbReference type="GeneID" id="93084715"/>
<dbReference type="KEGG" id="bam:Bamb_3084"/>
<dbReference type="PATRIC" id="fig|339670.21.peg.1778"/>
<dbReference type="eggNOG" id="COG1540">
    <property type="taxonomic scope" value="Bacteria"/>
</dbReference>
<dbReference type="Proteomes" id="UP000000662">
    <property type="component" value="Chromosome 1"/>
</dbReference>
<dbReference type="GO" id="GO:0017168">
    <property type="term" value="F:5-oxoprolinase (ATP-hydrolyzing) activity"/>
    <property type="evidence" value="ECO:0007669"/>
    <property type="project" value="UniProtKB-UniRule"/>
</dbReference>
<dbReference type="GO" id="GO:0005524">
    <property type="term" value="F:ATP binding"/>
    <property type="evidence" value="ECO:0007669"/>
    <property type="project" value="UniProtKB-UniRule"/>
</dbReference>
<dbReference type="GO" id="GO:0005975">
    <property type="term" value="P:carbohydrate metabolic process"/>
    <property type="evidence" value="ECO:0007669"/>
    <property type="project" value="InterPro"/>
</dbReference>
<dbReference type="CDD" id="cd10800">
    <property type="entry name" value="LamB_YcsF_YbgL_like"/>
    <property type="match status" value="1"/>
</dbReference>
<dbReference type="Gene3D" id="3.20.20.370">
    <property type="entry name" value="Glycoside hydrolase/deacetylase"/>
    <property type="match status" value="1"/>
</dbReference>
<dbReference type="HAMAP" id="MF_00691">
    <property type="entry name" value="PxpA"/>
    <property type="match status" value="1"/>
</dbReference>
<dbReference type="InterPro" id="IPR011330">
    <property type="entry name" value="Glyco_hydro/deAcase_b/a-brl"/>
</dbReference>
<dbReference type="InterPro" id="IPR005501">
    <property type="entry name" value="LamB/YcsF/PxpA-like"/>
</dbReference>
<dbReference type="NCBIfam" id="NF003814">
    <property type="entry name" value="PRK05406.1-3"/>
    <property type="match status" value="1"/>
</dbReference>
<dbReference type="NCBIfam" id="NF003815">
    <property type="entry name" value="PRK05406.1-4"/>
    <property type="match status" value="1"/>
</dbReference>
<dbReference type="NCBIfam" id="NF003816">
    <property type="entry name" value="PRK05406.1-5"/>
    <property type="match status" value="1"/>
</dbReference>
<dbReference type="PANTHER" id="PTHR30292:SF0">
    <property type="entry name" value="5-OXOPROLINASE SUBUNIT A"/>
    <property type="match status" value="1"/>
</dbReference>
<dbReference type="PANTHER" id="PTHR30292">
    <property type="entry name" value="UNCHARACTERIZED PROTEIN YBGL-RELATED"/>
    <property type="match status" value="1"/>
</dbReference>
<dbReference type="Pfam" id="PF03746">
    <property type="entry name" value="LamB_YcsF"/>
    <property type="match status" value="1"/>
</dbReference>
<dbReference type="SUPFAM" id="SSF88713">
    <property type="entry name" value="Glycoside hydrolase/deacetylase"/>
    <property type="match status" value="1"/>
</dbReference>
<reference key="1">
    <citation type="submission" date="2006-08" db="EMBL/GenBank/DDBJ databases">
        <title>Complete sequence of chromosome 1 of Burkholderia cepacia AMMD.</title>
        <authorList>
            <person name="Copeland A."/>
            <person name="Lucas S."/>
            <person name="Lapidus A."/>
            <person name="Barry K."/>
            <person name="Detter J.C."/>
            <person name="Glavina del Rio T."/>
            <person name="Hammon N."/>
            <person name="Israni S."/>
            <person name="Pitluck S."/>
            <person name="Bruce D."/>
            <person name="Chain P."/>
            <person name="Malfatti S."/>
            <person name="Shin M."/>
            <person name="Vergez L."/>
            <person name="Schmutz J."/>
            <person name="Larimer F."/>
            <person name="Land M."/>
            <person name="Hauser L."/>
            <person name="Kyrpides N."/>
            <person name="Kim E."/>
            <person name="Parke J."/>
            <person name="Coenye T."/>
            <person name="Konstantinidis K."/>
            <person name="Ramette A."/>
            <person name="Tiedje J."/>
            <person name="Richardson P."/>
        </authorList>
    </citation>
    <scope>NUCLEOTIDE SEQUENCE [LARGE SCALE GENOMIC DNA]</scope>
    <source>
        <strain>ATCC BAA-244 / DSM 16087 / CCUG 44356 / LMG 19182 / AMMD</strain>
    </source>
</reference>
<name>PXPA_BURCM</name>